<proteinExistence type="inferred from homology"/>
<keyword id="KW-0963">Cytoplasm</keyword>
<keyword id="KW-0456">Lyase</keyword>
<keyword id="KW-0704">Schiff base</keyword>
<gene>
    <name evidence="1" type="primary">deoC</name>
    <name type="ordered locus">Bsph_3728</name>
</gene>
<accession>B1HTK8</accession>
<protein>
    <recommendedName>
        <fullName evidence="1">Deoxyribose-phosphate aldolase</fullName>
        <shortName evidence="1">DERA</shortName>
        <ecNumber evidence="1">4.1.2.4</ecNumber>
    </recommendedName>
    <alternativeName>
        <fullName evidence="1">2-deoxy-D-ribose 5-phosphate aldolase</fullName>
    </alternativeName>
    <alternativeName>
        <fullName evidence="1">Phosphodeoxyriboaldolase</fullName>
        <shortName evidence="1">Deoxyriboaldolase</shortName>
    </alternativeName>
</protein>
<sequence>MEQNFARMIDHTLLKAEATKEQIEKLCAEAKQFNFASVCVNPTWVKHSSELLQGSDVLVCTVIGFPLGANTPAVKAFEVKDAIANGANEVDMVINIGALKDKNYDLVQADIAAVVQAAKGSALVKVIIESCLLTDEEKVKACELAVAAGADYVKTSTGFSTGGATAADIALMRKTVGPELGVKASGGVRSLEDMKSMVEAGATRIGASSGVAIMNGLIADSNY</sequence>
<comment type="function">
    <text evidence="1">Catalyzes a reversible aldol reaction between acetaldehyde and D-glyceraldehyde 3-phosphate to generate 2-deoxy-D-ribose 5-phosphate.</text>
</comment>
<comment type="catalytic activity">
    <reaction evidence="1">
        <text>2-deoxy-D-ribose 5-phosphate = D-glyceraldehyde 3-phosphate + acetaldehyde</text>
        <dbReference type="Rhea" id="RHEA:12821"/>
        <dbReference type="ChEBI" id="CHEBI:15343"/>
        <dbReference type="ChEBI" id="CHEBI:59776"/>
        <dbReference type="ChEBI" id="CHEBI:62877"/>
        <dbReference type="EC" id="4.1.2.4"/>
    </reaction>
</comment>
<comment type="pathway">
    <text evidence="1">Carbohydrate degradation; 2-deoxy-D-ribose 1-phosphate degradation; D-glyceraldehyde 3-phosphate and acetaldehyde from 2-deoxy-alpha-D-ribose 1-phosphate: step 2/2.</text>
</comment>
<comment type="subcellular location">
    <subcellularLocation>
        <location evidence="1">Cytoplasm</location>
    </subcellularLocation>
</comment>
<comment type="similarity">
    <text evidence="1">Belongs to the DeoC/FbaB aldolase family. DeoC type 1 subfamily.</text>
</comment>
<organism>
    <name type="scientific">Lysinibacillus sphaericus (strain C3-41)</name>
    <dbReference type="NCBI Taxonomy" id="444177"/>
    <lineage>
        <taxon>Bacteria</taxon>
        <taxon>Bacillati</taxon>
        <taxon>Bacillota</taxon>
        <taxon>Bacilli</taxon>
        <taxon>Bacillales</taxon>
        <taxon>Bacillaceae</taxon>
        <taxon>Lysinibacillus</taxon>
    </lineage>
</organism>
<feature type="chain" id="PRO_1000094849" description="Deoxyribose-phosphate aldolase">
    <location>
        <begin position="1"/>
        <end position="223"/>
    </location>
</feature>
<feature type="active site" description="Proton donor/acceptor" evidence="1">
    <location>
        <position position="91"/>
    </location>
</feature>
<feature type="active site" description="Schiff-base intermediate with acetaldehyde" evidence="1">
    <location>
        <position position="154"/>
    </location>
</feature>
<feature type="active site" description="Proton donor/acceptor" evidence="1">
    <location>
        <position position="183"/>
    </location>
</feature>
<reference key="1">
    <citation type="journal article" date="2008" name="J. Bacteriol.">
        <title>Complete genome sequence of the mosquitocidal bacterium Bacillus sphaericus C3-41 and comparison with those of closely related Bacillus species.</title>
        <authorList>
            <person name="Hu X."/>
            <person name="Fan W."/>
            <person name="Han B."/>
            <person name="Liu H."/>
            <person name="Zheng D."/>
            <person name="Li Q."/>
            <person name="Dong W."/>
            <person name="Yan J."/>
            <person name="Gao M."/>
            <person name="Berry C."/>
            <person name="Yuan Z."/>
        </authorList>
    </citation>
    <scope>NUCLEOTIDE SEQUENCE [LARGE SCALE GENOMIC DNA]</scope>
    <source>
        <strain>C3-41</strain>
    </source>
</reference>
<dbReference type="EC" id="4.1.2.4" evidence="1"/>
<dbReference type="EMBL" id="CP000817">
    <property type="protein sequence ID" value="ACA41212.1"/>
    <property type="molecule type" value="Genomic_DNA"/>
</dbReference>
<dbReference type="RefSeq" id="WP_012295263.1">
    <property type="nucleotide sequence ID" value="NC_010382.1"/>
</dbReference>
<dbReference type="SMR" id="B1HTK8"/>
<dbReference type="EnsemblBacteria" id="ACA41212">
    <property type="protein sequence ID" value="ACA41212"/>
    <property type="gene ID" value="Bsph_3728"/>
</dbReference>
<dbReference type="KEGG" id="lsp:Bsph_3728"/>
<dbReference type="HOGENOM" id="CLU_053595_0_2_9"/>
<dbReference type="UniPathway" id="UPA00002">
    <property type="reaction ID" value="UER00468"/>
</dbReference>
<dbReference type="Proteomes" id="UP000002164">
    <property type="component" value="Chromosome"/>
</dbReference>
<dbReference type="GO" id="GO:0005737">
    <property type="term" value="C:cytoplasm"/>
    <property type="evidence" value="ECO:0007669"/>
    <property type="project" value="UniProtKB-SubCell"/>
</dbReference>
<dbReference type="GO" id="GO:0004139">
    <property type="term" value="F:deoxyribose-phosphate aldolase activity"/>
    <property type="evidence" value="ECO:0007669"/>
    <property type="project" value="UniProtKB-UniRule"/>
</dbReference>
<dbReference type="GO" id="GO:0006018">
    <property type="term" value="P:2-deoxyribose 1-phosphate catabolic process"/>
    <property type="evidence" value="ECO:0007669"/>
    <property type="project" value="UniProtKB-UniRule"/>
</dbReference>
<dbReference type="GO" id="GO:0016052">
    <property type="term" value="P:carbohydrate catabolic process"/>
    <property type="evidence" value="ECO:0007669"/>
    <property type="project" value="TreeGrafter"/>
</dbReference>
<dbReference type="GO" id="GO:0009264">
    <property type="term" value="P:deoxyribonucleotide catabolic process"/>
    <property type="evidence" value="ECO:0007669"/>
    <property type="project" value="InterPro"/>
</dbReference>
<dbReference type="CDD" id="cd00959">
    <property type="entry name" value="DeoC"/>
    <property type="match status" value="1"/>
</dbReference>
<dbReference type="FunFam" id="3.20.20.70:FF:000044">
    <property type="entry name" value="Deoxyribose-phosphate aldolase"/>
    <property type="match status" value="1"/>
</dbReference>
<dbReference type="Gene3D" id="3.20.20.70">
    <property type="entry name" value="Aldolase class I"/>
    <property type="match status" value="1"/>
</dbReference>
<dbReference type="HAMAP" id="MF_00114">
    <property type="entry name" value="DeoC_type1"/>
    <property type="match status" value="1"/>
</dbReference>
<dbReference type="InterPro" id="IPR013785">
    <property type="entry name" value="Aldolase_TIM"/>
</dbReference>
<dbReference type="InterPro" id="IPR011343">
    <property type="entry name" value="DeoC"/>
</dbReference>
<dbReference type="InterPro" id="IPR002915">
    <property type="entry name" value="DeoC/FbaB/LacD_aldolase"/>
</dbReference>
<dbReference type="InterPro" id="IPR028581">
    <property type="entry name" value="DeoC_typeI"/>
</dbReference>
<dbReference type="NCBIfam" id="TIGR00126">
    <property type="entry name" value="deoC"/>
    <property type="match status" value="1"/>
</dbReference>
<dbReference type="PANTHER" id="PTHR10889">
    <property type="entry name" value="DEOXYRIBOSE-PHOSPHATE ALDOLASE"/>
    <property type="match status" value="1"/>
</dbReference>
<dbReference type="PANTHER" id="PTHR10889:SF1">
    <property type="entry name" value="DEOXYRIBOSE-PHOSPHATE ALDOLASE"/>
    <property type="match status" value="1"/>
</dbReference>
<dbReference type="Pfam" id="PF01791">
    <property type="entry name" value="DeoC"/>
    <property type="match status" value="1"/>
</dbReference>
<dbReference type="PIRSF" id="PIRSF001357">
    <property type="entry name" value="DeoC"/>
    <property type="match status" value="1"/>
</dbReference>
<dbReference type="SMART" id="SM01133">
    <property type="entry name" value="DeoC"/>
    <property type="match status" value="1"/>
</dbReference>
<dbReference type="SUPFAM" id="SSF51569">
    <property type="entry name" value="Aldolase"/>
    <property type="match status" value="1"/>
</dbReference>
<name>DEOC_LYSSC</name>
<evidence type="ECO:0000255" key="1">
    <source>
        <dbReference type="HAMAP-Rule" id="MF_00114"/>
    </source>
</evidence>